<name>G3PB_ARATH</name>
<evidence type="ECO:0000250" key="1"/>
<evidence type="ECO:0000250" key="2">
    <source>
        <dbReference type="UniProtKB" id="P25856"/>
    </source>
</evidence>
<evidence type="ECO:0000255" key="3">
    <source>
        <dbReference type="PROSITE-ProRule" id="PRU10009"/>
    </source>
</evidence>
<evidence type="ECO:0000269" key="4">
    <source>
    </source>
</evidence>
<evidence type="ECO:0000305" key="5"/>
<comment type="function">
    <text evidence="1">Involved in the photosynthetic reductive pentose phosphate pathway (Calvin-Benson cycle). Catalyzes the reduction of 1,3-diphosphoglycerate by NADPH (By similarity).</text>
</comment>
<comment type="catalytic activity">
    <reaction>
        <text>D-glyceraldehyde 3-phosphate + phosphate + NADP(+) = (2R)-3-phospho-glyceroyl phosphate + NADPH + H(+)</text>
        <dbReference type="Rhea" id="RHEA:10296"/>
        <dbReference type="ChEBI" id="CHEBI:15378"/>
        <dbReference type="ChEBI" id="CHEBI:43474"/>
        <dbReference type="ChEBI" id="CHEBI:57604"/>
        <dbReference type="ChEBI" id="CHEBI:57783"/>
        <dbReference type="ChEBI" id="CHEBI:58349"/>
        <dbReference type="ChEBI" id="CHEBI:59776"/>
        <dbReference type="EC" id="1.2.1.13"/>
    </reaction>
</comment>
<comment type="pathway">
    <text>Carbohydrate biosynthesis; Calvin cycle.</text>
</comment>
<comment type="subunit">
    <text evidence="1">Tetramer of either four A chains (GAPDH 2) or two A and two B chains (GAPDH 1).</text>
</comment>
<comment type="subcellular location">
    <subcellularLocation>
        <location evidence="2">Plastid</location>
        <location evidence="2">Chloroplast membrane</location>
        <topology evidence="2">Peripheral membrane protein</topology>
    </subcellularLocation>
    <subcellularLocation>
        <location evidence="2">Plastid</location>
        <location evidence="2">Chloroplast stroma</location>
    </subcellularLocation>
</comment>
<comment type="tissue specificity">
    <text evidence="4">Expressed in leaves and stems.</text>
</comment>
<comment type="induction">
    <text evidence="4">Repressed by darkness and sucrose.</text>
</comment>
<comment type="miscellaneous">
    <text>Plants contain three types of GAPDH: NAD-dependent cytosolic forms which participate in glycolysis, NAD-dependent chloroplastic forms which participate in plastidic glycolysis and NADP-dependent chloroplastic forms which participate in the photosynthetic reductive pentose phosphate pathway (Calvin-Benson cycle). All the forms are encoded by distinct genes.</text>
</comment>
<comment type="similarity">
    <text evidence="5">Belongs to the glyceraldehyde-3-phosphate dehydrogenase family.</text>
</comment>
<gene>
    <name type="primary">GAPB</name>
    <name type="ordered locus">At1g42970</name>
    <name type="ORF">F13A11.3</name>
</gene>
<sequence>MATHAALAVSRIPVTQRLQSKSAIHSFPAQCSSKRLEVAEFSGLRMSSIGGEASFFDAVAAQIIPKAVTTSTPVRGETVAKLKVAINGFGRIGRNFLRCWHGRKDSPLEVVVLNDSGGVKNASHLLKYDSMLGTFKAEVKIVDNETISVDGKLIKVVSNRDPLKLPWAELGIDIVIEGTGVFVDGPGAGKHIQAGASKVIITAPAKGADIPTYVMGVNEQDYGHDVANIISNASCTTNCLAPFAKVLDEEFGIVKGTMTTTHSYTGDQRLLDASHRDLRRARAAALNIVPTSTGAAKAVSLVLPQLKGKLNGIALRVPTPNVSVVDLVINVEKKGLTAEDVNEAFRKAANGPMKGILDVCDAPLVSVDFRCSDVSTTIDSSLTMVMGDDMVKVVAWYDNEWGYSQRVVDLAHLVASKWPGAEAVGSGDPLEDFCKTNPADEECKVYD</sequence>
<dbReference type="EC" id="1.2.1.13"/>
<dbReference type="EMBL" id="M64115">
    <property type="protein sequence ID" value="AAD10210.1"/>
    <property type="molecule type" value="mRNA"/>
</dbReference>
<dbReference type="EMBL" id="M64118">
    <property type="protein sequence ID" value="AAA32795.1"/>
    <property type="molecule type" value="Genomic_DNA"/>
</dbReference>
<dbReference type="EMBL" id="AC068324">
    <property type="protein sequence ID" value="AAG51517.1"/>
    <property type="molecule type" value="Genomic_DNA"/>
</dbReference>
<dbReference type="EMBL" id="CP002684">
    <property type="protein sequence ID" value="AEE31933.1"/>
    <property type="molecule type" value="Genomic_DNA"/>
</dbReference>
<dbReference type="EMBL" id="AY039961">
    <property type="protein sequence ID" value="AAK64065.1"/>
    <property type="molecule type" value="mRNA"/>
</dbReference>
<dbReference type="EMBL" id="AY039539">
    <property type="protein sequence ID" value="AAK62594.1"/>
    <property type="molecule type" value="mRNA"/>
</dbReference>
<dbReference type="EMBL" id="AY079402">
    <property type="protein sequence ID" value="AAL85133.1"/>
    <property type="molecule type" value="mRNA"/>
</dbReference>
<dbReference type="EMBL" id="AY095991">
    <property type="protein sequence ID" value="AAM19948.1"/>
    <property type="molecule type" value="mRNA"/>
</dbReference>
<dbReference type="EMBL" id="AY140091">
    <property type="protein sequence ID" value="AAM98232.1"/>
    <property type="molecule type" value="mRNA"/>
</dbReference>
<dbReference type="EMBL" id="BT002267">
    <property type="protein sequence ID" value="AAN72278.1"/>
    <property type="molecule type" value="mRNA"/>
</dbReference>
<dbReference type="EMBL" id="AK230314">
    <property type="protein sequence ID" value="BAF02115.1"/>
    <property type="molecule type" value="mRNA"/>
</dbReference>
<dbReference type="PIR" id="C96497">
    <property type="entry name" value="C96497"/>
</dbReference>
<dbReference type="PIR" id="JQ1286">
    <property type="entry name" value="JQ1286"/>
</dbReference>
<dbReference type="RefSeq" id="NP_174996.1">
    <property type="nucleotide sequence ID" value="NM_103456.4"/>
</dbReference>
<dbReference type="SMR" id="P25857"/>
<dbReference type="BioGRID" id="26120">
    <property type="interactions" value="10"/>
</dbReference>
<dbReference type="FunCoup" id="P25857">
    <property type="interactions" value="1060"/>
</dbReference>
<dbReference type="IntAct" id="P25857">
    <property type="interactions" value="3"/>
</dbReference>
<dbReference type="MINT" id="P25857"/>
<dbReference type="STRING" id="3702.P25857"/>
<dbReference type="iPTMnet" id="P25857"/>
<dbReference type="MetOSite" id="P25857"/>
<dbReference type="PaxDb" id="3702-AT1G42970.1"/>
<dbReference type="ProteomicsDB" id="248556"/>
<dbReference type="EnsemblPlants" id="AT1G42970.1">
    <property type="protein sequence ID" value="AT1G42970.1"/>
    <property type="gene ID" value="AT1G42970"/>
</dbReference>
<dbReference type="GeneID" id="840895"/>
<dbReference type="Gramene" id="AT1G42970.1">
    <property type="protein sequence ID" value="AT1G42970.1"/>
    <property type="gene ID" value="AT1G42970"/>
</dbReference>
<dbReference type="KEGG" id="ath:AT1G42970"/>
<dbReference type="Araport" id="AT1G42970"/>
<dbReference type="TAIR" id="AT1G42970">
    <property type="gene designation" value="GAPB"/>
</dbReference>
<dbReference type="eggNOG" id="KOG0657">
    <property type="taxonomic scope" value="Eukaryota"/>
</dbReference>
<dbReference type="HOGENOM" id="CLU_030140_0_2_1"/>
<dbReference type="InParanoid" id="P25857"/>
<dbReference type="OMA" id="QVKLYVW"/>
<dbReference type="OrthoDB" id="1152826at2759"/>
<dbReference type="PhylomeDB" id="P25857"/>
<dbReference type="BRENDA" id="1.2.1.13">
    <property type="organism ID" value="399"/>
</dbReference>
<dbReference type="UniPathway" id="UPA00116"/>
<dbReference type="CD-CODE" id="4299E36E">
    <property type="entry name" value="Nucleolus"/>
</dbReference>
<dbReference type="PRO" id="PR:P25857"/>
<dbReference type="Proteomes" id="UP000006548">
    <property type="component" value="Chromosome 1"/>
</dbReference>
<dbReference type="ExpressionAtlas" id="P25857">
    <property type="expression patterns" value="baseline and differential"/>
</dbReference>
<dbReference type="GO" id="GO:0048046">
    <property type="term" value="C:apoplast"/>
    <property type="evidence" value="ECO:0007005"/>
    <property type="project" value="TAIR"/>
</dbReference>
<dbReference type="GO" id="GO:0009507">
    <property type="term" value="C:chloroplast"/>
    <property type="evidence" value="ECO:0007005"/>
    <property type="project" value="TAIR"/>
</dbReference>
<dbReference type="GO" id="GO:0009941">
    <property type="term" value="C:chloroplast envelope"/>
    <property type="evidence" value="ECO:0007005"/>
    <property type="project" value="TAIR"/>
</dbReference>
<dbReference type="GO" id="GO:0031969">
    <property type="term" value="C:chloroplast membrane"/>
    <property type="evidence" value="ECO:0007669"/>
    <property type="project" value="UniProtKB-SubCell"/>
</dbReference>
<dbReference type="GO" id="GO:0009570">
    <property type="term" value="C:chloroplast stroma"/>
    <property type="evidence" value="ECO:0007005"/>
    <property type="project" value="TAIR"/>
</dbReference>
<dbReference type="GO" id="GO:0009535">
    <property type="term" value="C:chloroplast thylakoid membrane"/>
    <property type="evidence" value="ECO:0007005"/>
    <property type="project" value="TAIR"/>
</dbReference>
<dbReference type="GO" id="GO:0005634">
    <property type="term" value="C:nucleus"/>
    <property type="evidence" value="ECO:0007005"/>
    <property type="project" value="TAIR"/>
</dbReference>
<dbReference type="GO" id="GO:0010319">
    <property type="term" value="C:stromule"/>
    <property type="evidence" value="ECO:0000314"/>
    <property type="project" value="TAIR"/>
</dbReference>
<dbReference type="GO" id="GO:0004365">
    <property type="term" value="F:glyceraldehyde-3-phosphate dehydrogenase (NAD+) (phosphorylating) activity"/>
    <property type="evidence" value="ECO:0000303"/>
    <property type="project" value="TAIR"/>
</dbReference>
<dbReference type="GO" id="GO:0047100">
    <property type="term" value="F:glyceraldehyde-3-phosphate dehydrogenase (NADP+) (phosphorylating) activity"/>
    <property type="evidence" value="ECO:0007669"/>
    <property type="project" value="UniProtKB-EC"/>
</dbReference>
<dbReference type="GO" id="GO:0003729">
    <property type="term" value="F:mRNA binding"/>
    <property type="evidence" value="ECO:0000314"/>
    <property type="project" value="TAIR"/>
</dbReference>
<dbReference type="GO" id="GO:0051287">
    <property type="term" value="F:NAD binding"/>
    <property type="evidence" value="ECO:0007669"/>
    <property type="project" value="InterPro"/>
</dbReference>
<dbReference type="GO" id="GO:0050661">
    <property type="term" value="F:NADP binding"/>
    <property type="evidence" value="ECO:0007669"/>
    <property type="project" value="InterPro"/>
</dbReference>
<dbReference type="GO" id="GO:1901149">
    <property type="term" value="F:salicylic acid binding"/>
    <property type="evidence" value="ECO:0007005"/>
    <property type="project" value="TAIR"/>
</dbReference>
<dbReference type="GO" id="GO:0006006">
    <property type="term" value="P:glucose metabolic process"/>
    <property type="evidence" value="ECO:0007669"/>
    <property type="project" value="InterPro"/>
</dbReference>
<dbReference type="GO" id="GO:0019253">
    <property type="term" value="P:reductive pentose-phosphate cycle"/>
    <property type="evidence" value="ECO:0000303"/>
    <property type="project" value="TAIR"/>
</dbReference>
<dbReference type="GO" id="GO:0009409">
    <property type="term" value="P:response to cold"/>
    <property type="evidence" value="ECO:0000270"/>
    <property type="project" value="TAIR"/>
</dbReference>
<dbReference type="GO" id="GO:0009416">
    <property type="term" value="P:response to light stimulus"/>
    <property type="evidence" value="ECO:0000270"/>
    <property type="project" value="TAIR"/>
</dbReference>
<dbReference type="GO" id="GO:0009744">
    <property type="term" value="P:response to sucrose"/>
    <property type="evidence" value="ECO:0000270"/>
    <property type="project" value="TAIR"/>
</dbReference>
<dbReference type="CDD" id="cd18126">
    <property type="entry name" value="GAPDH_I_C"/>
    <property type="match status" value="1"/>
</dbReference>
<dbReference type="CDD" id="cd05214">
    <property type="entry name" value="GAPDH_I_N"/>
    <property type="match status" value="1"/>
</dbReference>
<dbReference type="FunFam" id="3.30.360.10:FF:000002">
    <property type="entry name" value="Glyceraldehyde-3-phosphate dehydrogenase"/>
    <property type="match status" value="1"/>
</dbReference>
<dbReference type="FunFam" id="3.40.50.720:FF:000001">
    <property type="entry name" value="Glyceraldehyde-3-phosphate dehydrogenase"/>
    <property type="match status" value="1"/>
</dbReference>
<dbReference type="Gene3D" id="3.30.360.10">
    <property type="entry name" value="Dihydrodipicolinate Reductase, domain 2"/>
    <property type="match status" value="1"/>
</dbReference>
<dbReference type="Gene3D" id="3.40.50.720">
    <property type="entry name" value="NAD(P)-binding Rossmann-like Domain"/>
    <property type="match status" value="1"/>
</dbReference>
<dbReference type="InterPro" id="IPR020831">
    <property type="entry name" value="GlycerAld/Erythrose_P_DH"/>
</dbReference>
<dbReference type="InterPro" id="IPR020830">
    <property type="entry name" value="GlycerAld_3-P_DH_AS"/>
</dbReference>
<dbReference type="InterPro" id="IPR020829">
    <property type="entry name" value="GlycerAld_3-P_DH_cat"/>
</dbReference>
<dbReference type="InterPro" id="IPR020828">
    <property type="entry name" value="GlycerAld_3-P_DH_NAD(P)-bd"/>
</dbReference>
<dbReference type="InterPro" id="IPR006424">
    <property type="entry name" value="Glyceraldehyde-3-P_DH_1"/>
</dbReference>
<dbReference type="InterPro" id="IPR036291">
    <property type="entry name" value="NAD(P)-bd_dom_sf"/>
</dbReference>
<dbReference type="NCBIfam" id="TIGR01534">
    <property type="entry name" value="GAPDH-I"/>
    <property type="match status" value="1"/>
</dbReference>
<dbReference type="PANTHER" id="PTHR43148">
    <property type="entry name" value="GLYCERALDEHYDE-3-PHOSPHATE DEHYDROGENASE 2"/>
    <property type="match status" value="1"/>
</dbReference>
<dbReference type="Pfam" id="PF02672">
    <property type="entry name" value="CP12"/>
    <property type="match status" value="1"/>
</dbReference>
<dbReference type="Pfam" id="PF02800">
    <property type="entry name" value="Gp_dh_C"/>
    <property type="match status" value="1"/>
</dbReference>
<dbReference type="Pfam" id="PF00044">
    <property type="entry name" value="Gp_dh_N"/>
    <property type="match status" value="1"/>
</dbReference>
<dbReference type="PRINTS" id="PR00078">
    <property type="entry name" value="G3PDHDRGNASE"/>
</dbReference>
<dbReference type="SMART" id="SM00846">
    <property type="entry name" value="Gp_dh_N"/>
    <property type="match status" value="1"/>
</dbReference>
<dbReference type="SUPFAM" id="SSF55347">
    <property type="entry name" value="Glyceraldehyde-3-phosphate dehydrogenase-like, C-terminal domain"/>
    <property type="match status" value="1"/>
</dbReference>
<dbReference type="SUPFAM" id="SSF51735">
    <property type="entry name" value="NAD(P)-binding Rossmann-fold domains"/>
    <property type="match status" value="1"/>
</dbReference>
<dbReference type="PROSITE" id="PS00071">
    <property type="entry name" value="GAPDH"/>
    <property type="match status" value="1"/>
</dbReference>
<proteinExistence type="evidence at protein level"/>
<feature type="transit peptide" description="Chloroplast" evidence="1">
    <location>
        <begin position="1"/>
        <end position="80"/>
    </location>
</feature>
<feature type="chain" id="PRO_0000010417" description="Glyceraldehyde-3-phosphate dehydrogenase GAPB, chloroplastic">
    <location>
        <begin position="81"/>
        <end position="447"/>
    </location>
</feature>
<feature type="active site" description="Nucleophile" evidence="3">
    <location>
        <position position="235"/>
    </location>
</feature>
<feature type="binding site" evidence="1">
    <location>
        <begin position="91"/>
        <end position="92"/>
    </location>
    <ligand>
        <name>NADP(+)</name>
        <dbReference type="ChEBI" id="CHEBI:58349"/>
    </ligand>
</feature>
<feature type="binding site" evidence="1">
    <location>
        <position position="115"/>
    </location>
    <ligand>
        <name>NADP(+)</name>
        <dbReference type="ChEBI" id="CHEBI:58349"/>
    </ligand>
</feature>
<feature type="binding site" evidence="1">
    <location>
        <position position="160"/>
    </location>
    <ligand>
        <name>NADP(+)</name>
        <dbReference type="ChEBI" id="CHEBI:58349"/>
    </ligand>
</feature>
<feature type="binding site" evidence="1">
    <location>
        <begin position="234"/>
        <end position="236"/>
    </location>
    <ligand>
        <name>D-glyceraldehyde 3-phosphate</name>
        <dbReference type="ChEBI" id="CHEBI:59776"/>
    </ligand>
</feature>
<feature type="binding site" evidence="1">
    <location>
        <position position="265"/>
    </location>
    <ligand>
        <name>D-glyceraldehyde 3-phosphate</name>
        <dbReference type="ChEBI" id="CHEBI:59776"/>
    </ligand>
</feature>
<feature type="binding site" evidence="1">
    <location>
        <position position="280"/>
    </location>
    <ligand>
        <name>D-glyceraldehyde 3-phosphate</name>
        <dbReference type="ChEBI" id="CHEBI:59776"/>
    </ligand>
</feature>
<feature type="binding site" evidence="1">
    <location>
        <begin position="293"/>
        <end position="294"/>
    </location>
    <ligand>
        <name>D-glyceraldehyde 3-phosphate</name>
        <dbReference type="ChEBI" id="CHEBI:59776"/>
    </ligand>
</feature>
<feature type="binding site" evidence="1">
    <location>
        <position position="316"/>
    </location>
    <ligand>
        <name>D-glyceraldehyde 3-phosphate</name>
        <dbReference type="ChEBI" id="CHEBI:59776"/>
    </ligand>
</feature>
<feature type="binding site" evidence="1">
    <location>
        <position position="399"/>
    </location>
    <ligand>
        <name>NADP(+)</name>
        <dbReference type="ChEBI" id="CHEBI:58349"/>
    </ligand>
</feature>
<feature type="site" description="Activates thiol group during catalysis" evidence="1">
    <location>
        <position position="262"/>
    </location>
</feature>
<keyword id="KW-0113">Calvin cycle</keyword>
<keyword id="KW-0150">Chloroplast</keyword>
<keyword id="KW-0472">Membrane</keyword>
<keyword id="KW-0521">NADP</keyword>
<keyword id="KW-0560">Oxidoreductase</keyword>
<keyword id="KW-0934">Plastid</keyword>
<keyword id="KW-1185">Reference proteome</keyword>
<keyword id="KW-0809">Transit peptide</keyword>
<reference key="1">
    <citation type="journal article" date="1991" name="Gene">
        <title>Cloning and chromosomal mapping of nuclear genes encoding chloroplast and cytosolic glyceraldehyde-3-phosphate-dehydrogenase from Arabidopsis thaliana.</title>
        <authorList>
            <person name="Shih M.-C."/>
            <person name="Heinrich P."/>
            <person name="Goodman H.M."/>
        </authorList>
    </citation>
    <scope>NUCLEOTIDE SEQUENCE [GENOMIC DNA / MRNA]</scope>
    <source>
        <tissue>Leaf</tissue>
    </source>
</reference>
<reference key="2">
    <citation type="journal article" date="1992" name="Gene">
        <authorList>
            <person name="Shih M.-C."/>
            <person name="Heinrich P."/>
            <person name="Goodman H.M."/>
        </authorList>
    </citation>
    <scope>ERRATUM OF PUBMED:1916285</scope>
</reference>
<reference key="3">
    <citation type="journal article" date="2000" name="Nature">
        <title>Sequence and analysis of chromosome 1 of the plant Arabidopsis thaliana.</title>
        <authorList>
            <person name="Theologis A."/>
            <person name="Ecker J.R."/>
            <person name="Palm C.J."/>
            <person name="Federspiel N.A."/>
            <person name="Kaul S."/>
            <person name="White O."/>
            <person name="Alonso J."/>
            <person name="Altafi H."/>
            <person name="Araujo R."/>
            <person name="Bowman C.L."/>
            <person name="Brooks S.Y."/>
            <person name="Buehler E."/>
            <person name="Chan A."/>
            <person name="Chao Q."/>
            <person name="Chen H."/>
            <person name="Cheuk R.F."/>
            <person name="Chin C.W."/>
            <person name="Chung M.K."/>
            <person name="Conn L."/>
            <person name="Conway A.B."/>
            <person name="Conway A.R."/>
            <person name="Creasy T.H."/>
            <person name="Dewar K."/>
            <person name="Dunn P."/>
            <person name="Etgu P."/>
            <person name="Feldblyum T.V."/>
            <person name="Feng J.-D."/>
            <person name="Fong B."/>
            <person name="Fujii C.Y."/>
            <person name="Gill J.E."/>
            <person name="Goldsmith A.D."/>
            <person name="Haas B."/>
            <person name="Hansen N.F."/>
            <person name="Hughes B."/>
            <person name="Huizar L."/>
            <person name="Hunter J.L."/>
            <person name="Jenkins J."/>
            <person name="Johnson-Hopson C."/>
            <person name="Khan S."/>
            <person name="Khaykin E."/>
            <person name="Kim C.J."/>
            <person name="Koo H.L."/>
            <person name="Kremenetskaia I."/>
            <person name="Kurtz D.B."/>
            <person name="Kwan A."/>
            <person name="Lam B."/>
            <person name="Langin-Hooper S."/>
            <person name="Lee A."/>
            <person name="Lee J.M."/>
            <person name="Lenz C.A."/>
            <person name="Li J.H."/>
            <person name="Li Y.-P."/>
            <person name="Lin X."/>
            <person name="Liu S.X."/>
            <person name="Liu Z.A."/>
            <person name="Luros J.S."/>
            <person name="Maiti R."/>
            <person name="Marziali A."/>
            <person name="Militscher J."/>
            <person name="Miranda M."/>
            <person name="Nguyen M."/>
            <person name="Nierman W.C."/>
            <person name="Osborne B.I."/>
            <person name="Pai G."/>
            <person name="Peterson J."/>
            <person name="Pham P.K."/>
            <person name="Rizzo M."/>
            <person name="Rooney T."/>
            <person name="Rowley D."/>
            <person name="Sakano H."/>
            <person name="Salzberg S.L."/>
            <person name="Schwartz J.R."/>
            <person name="Shinn P."/>
            <person name="Southwick A.M."/>
            <person name="Sun H."/>
            <person name="Tallon L.J."/>
            <person name="Tambunga G."/>
            <person name="Toriumi M.J."/>
            <person name="Town C.D."/>
            <person name="Utterback T."/>
            <person name="Van Aken S."/>
            <person name="Vaysberg M."/>
            <person name="Vysotskaia V.S."/>
            <person name="Walker M."/>
            <person name="Wu D."/>
            <person name="Yu G."/>
            <person name="Fraser C.M."/>
            <person name="Venter J.C."/>
            <person name="Davis R.W."/>
        </authorList>
    </citation>
    <scope>NUCLEOTIDE SEQUENCE [LARGE SCALE GENOMIC DNA]</scope>
    <source>
        <strain>cv. Columbia</strain>
    </source>
</reference>
<reference key="4">
    <citation type="journal article" date="2017" name="Plant J.">
        <title>Araport11: a complete reannotation of the Arabidopsis thaliana reference genome.</title>
        <authorList>
            <person name="Cheng C.Y."/>
            <person name="Krishnakumar V."/>
            <person name="Chan A.P."/>
            <person name="Thibaud-Nissen F."/>
            <person name="Schobel S."/>
            <person name="Town C.D."/>
        </authorList>
    </citation>
    <scope>GENOME REANNOTATION</scope>
    <source>
        <strain>cv. Columbia</strain>
    </source>
</reference>
<reference key="5">
    <citation type="journal article" date="2003" name="Science">
        <title>Empirical analysis of transcriptional activity in the Arabidopsis genome.</title>
        <authorList>
            <person name="Yamada K."/>
            <person name="Lim J."/>
            <person name="Dale J.M."/>
            <person name="Chen H."/>
            <person name="Shinn P."/>
            <person name="Palm C.J."/>
            <person name="Southwick A.M."/>
            <person name="Wu H.C."/>
            <person name="Kim C.J."/>
            <person name="Nguyen M."/>
            <person name="Pham P.K."/>
            <person name="Cheuk R.F."/>
            <person name="Karlin-Newmann G."/>
            <person name="Liu S.X."/>
            <person name="Lam B."/>
            <person name="Sakano H."/>
            <person name="Wu T."/>
            <person name="Yu G."/>
            <person name="Miranda M."/>
            <person name="Quach H.L."/>
            <person name="Tripp M."/>
            <person name="Chang C.H."/>
            <person name="Lee J.M."/>
            <person name="Toriumi M.J."/>
            <person name="Chan M.M."/>
            <person name="Tang C.C."/>
            <person name="Onodera C.S."/>
            <person name="Deng J.M."/>
            <person name="Akiyama K."/>
            <person name="Ansari Y."/>
            <person name="Arakawa T."/>
            <person name="Banh J."/>
            <person name="Banno F."/>
            <person name="Bowser L."/>
            <person name="Brooks S.Y."/>
            <person name="Carninci P."/>
            <person name="Chao Q."/>
            <person name="Choy N."/>
            <person name="Enju A."/>
            <person name="Goldsmith A.D."/>
            <person name="Gurjal M."/>
            <person name="Hansen N.F."/>
            <person name="Hayashizaki Y."/>
            <person name="Johnson-Hopson C."/>
            <person name="Hsuan V.W."/>
            <person name="Iida K."/>
            <person name="Karnes M."/>
            <person name="Khan S."/>
            <person name="Koesema E."/>
            <person name="Ishida J."/>
            <person name="Jiang P.X."/>
            <person name="Jones T."/>
            <person name="Kawai J."/>
            <person name="Kamiya A."/>
            <person name="Meyers C."/>
            <person name="Nakajima M."/>
            <person name="Narusaka M."/>
            <person name="Seki M."/>
            <person name="Sakurai T."/>
            <person name="Satou M."/>
            <person name="Tamse R."/>
            <person name="Vaysberg M."/>
            <person name="Wallender E.K."/>
            <person name="Wong C."/>
            <person name="Yamamura Y."/>
            <person name="Yuan S."/>
            <person name="Shinozaki K."/>
            <person name="Davis R.W."/>
            <person name="Theologis A."/>
            <person name="Ecker J.R."/>
        </authorList>
    </citation>
    <scope>NUCLEOTIDE SEQUENCE [LARGE SCALE MRNA]</scope>
    <source>
        <strain>cv. Columbia</strain>
    </source>
</reference>
<reference key="6">
    <citation type="submission" date="2006-07" db="EMBL/GenBank/DDBJ databases">
        <title>Large-scale analysis of RIKEN Arabidopsis full-length (RAFL) cDNAs.</title>
        <authorList>
            <person name="Totoki Y."/>
            <person name="Seki M."/>
            <person name="Ishida J."/>
            <person name="Nakajima M."/>
            <person name="Enju A."/>
            <person name="Kamiya A."/>
            <person name="Narusaka M."/>
            <person name="Shin-i T."/>
            <person name="Nakagawa M."/>
            <person name="Sakamoto N."/>
            <person name="Oishi K."/>
            <person name="Kohara Y."/>
            <person name="Kobayashi M."/>
            <person name="Toyoda A."/>
            <person name="Sakaki Y."/>
            <person name="Sakurai T."/>
            <person name="Iida K."/>
            <person name="Akiyama K."/>
            <person name="Satou M."/>
            <person name="Toyoda T."/>
            <person name="Konagaya A."/>
            <person name="Carninci P."/>
            <person name="Kawai J."/>
            <person name="Hayashizaki Y."/>
            <person name="Shinozaki K."/>
        </authorList>
    </citation>
    <scope>NUCLEOTIDE SEQUENCE [LARGE SCALE MRNA]</scope>
    <source>
        <strain>cv. Columbia</strain>
    </source>
</reference>
<reference key="7">
    <citation type="journal article" date="2005" name="J. Exp. Bot.">
        <title>Co-ordinated gene expression of photosynthetic glyceraldehyde-3-phosphate dehydrogenase, phosphoribulokinase, and CP12 in Arabidopsis thaliana.</title>
        <authorList>
            <person name="Marri L."/>
            <person name="Sparla F."/>
            <person name="Pupillo P."/>
            <person name="Trost P."/>
        </authorList>
    </citation>
    <scope>TISSUE SPECIFICITY</scope>
    <scope>INDUCTION</scope>
</reference>
<reference key="8">
    <citation type="journal article" date="2009" name="J. Proteomics">
        <title>Phosphoproteomic analysis of nuclei-enriched fractions from Arabidopsis thaliana.</title>
        <authorList>
            <person name="Jones A.M.E."/>
            <person name="MacLean D."/>
            <person name="Studholme D.J."/>
            <person name="Serna-Sanz A."/>
            <person name="Andreasson E."/>
            <person name="Rathjen J.P."/>
            <person name="Peck S.C."/>
        </authorList>
    </citation>
    <scope>IDENTIFICATION BY MASS SPECTROMETRY [LARGE SCALE ANALYSIS]</scope>
    <source>
        <strain>cv. Columbia</strain>
    </source>
</reference>
<organism>
    <name type="scientific">Arabidopsis thaliana</name>
    <name type="common">Mouse-ear cress</name>
    <dbReference type="NCBI Taxonomy" id="3702"/>
    <lineage>
        <taxon>Eukaryota</taxon>
        <taxon>Viridiplantae</taxon>
        <taxon>Streptophyta</taxon>
        <taxon>Embryophyta</taxon>
        <taxon>Tracheophyta</taxon>
        <taxon>Spermatophyta</taxon>
        <taxon>Magnoliopsida</taxon>
        <taxon>eudicotyledons</taxon>
        <taxon>Gunneridae</taxon>
        <taxon>Pentapetalae</taxon>
        <taxon>rosids</taxon>
        <taxon>malvids</taxon>
        <taxon>Brassicales</taxon>
        <taxon>Brassicaceae</taxon>
        <taxon>Camelineae</taxon>
        <taxon>Arabidopsis</taxon>
    </lineage>
</organism>
<protein>
    <recommendedName>
        <fullName>Glyceraldehyde-3-phosphate dehydrogenase GAPB, chloroplastic</fullName>
        <ecNumber>1.2.1.13</ecNumber>
    </recommendedName>
    <alternativeName>
        <fullName>NADP-dependent glyceraldehydephosphate dehydrogenase B</fullName>
    </alternativeName>
</protein>
<accession>P25857</accession>
<accession>Q0WL92</accession>
<accession>Q9C7S2</accession>